<sequence length="506" mass="54951">MGTPIKASLLALFLFFLLSPTAFSVSNGGLLRVGLKKRKVDRLDQLRAHGVHMLGNARKDFGFRRTLSDSGSGIVALTNDRDTAYYGEIGIGTPPQNFAVIFDTGSSDLWVPSTKCDTSLACVIHPRYDSGDSSTYKGNGTTASIQYGTGAIVGFYSQDSVEVGDLVVEHQDFIETTEEDDTVFLKSEFDGILGLGFQEISAGKAVPVWYNMVNQGLVEEAVFSFWLNRNVDEEEGGELVFGGVDPNHFRGNHTYVPVTRKGYWQFEMGDVLIGDKSSGFCAGGCAAIADSGTSFFAGPTAIITQINQAIGAKGVLNQQCKTLVGQYGKNMIQMLTSEVQPDKICSHMKLCTFDGAHDVRSMIESVVDKNNDKSSGGEICTFCEMALVRMQNEIKRNETEDNIINHVNEVCDQLPTSSAESIVDCNGISSMPNIAFTIGSKLFEVTPEQYIYKVGEGEAATCISGFTALDIMSPQGPIWILGDMFMGPYHTVFDYGKLRVGFAEAV</sequence>
<keyword id="KW-0002">3D-structure</keyword>
<keyword id="KW-0064">Aspartyl protease</keyword>
<keyword id="KW-0134">Cell wall</keyword>
<keyword id="KW-0903">Direct protein sequencing</keyword>
<keyword id="KW-1015">Disulfide bond</keyword>
<keyword id="KW-0256">Endoplasmic reticulum</keyword>
<keyword id="KW-0272">Extracellular matrix</keyword>
<keyword id="KW-0325">Glycoprotein</keyword>
<keyword id="KW-0378">Hydrolase</keyword>
<keyword id="KW-0472">Membrane</keyword>
<keyword id="KW-0492">Microsome</keyword>
<keyword id="KW-0645">Protease</keyword>
<keyword id="KW-0964">Secreted</keyword>
<keyword id="KW-0732">Signal</keyword>
<keyword id="KW-0926">Vacuole</keyword>
<keyword id="KW-0865">Zymogen</keyword>
<evidence type="ECO:0000250" key="1">
    <source>
        <dbReference type="UniProtKB" id="P42210"/>
    </source>
</evidence>
<evidence type="ECO:0000250" key="2">
    <source>
        <dbReference type="UniProtKB" id="Q9XFX3"/>
    </source>
</evidence>
<evidence type="ECO:0000255" key="3"/>
<evidence type="ECO:0000255" key="4">
    <source>
        <dbReference type="PROSITE-ProRule" id="PRU00415"/>
    </source>
</evidence>
<evidence type="ECO:0000255" key="5">
    <source>
        <dbReference type="PROSITE-ProRule" id="PRU01103"/>
    </source>
</evidence>
<evidence type="ECO:0000255" key="6">
    <source>
        <dbReference type="PROSITE-ProRule" id="PRU10094"/>
    </source>
</evidence>
<evidence type="ECO:0000269" key="7">
    <source>
    </source>
</evidence>
<evidence type="ECO:0000269" key="8">
    <source>
    </source>
</evidence>
<evidence type="ECO:0000269" key="9">
    <source>
    </source>
</evidence>
<evidence type="ECO:0000269" key="10">
    <source>
    </source>
</evidence>
<evidence type="ECO:0000303" key="11">
    <source>
    </source>
</evidence>
<evidence type="ECO:0000305" key="12"/>
<evidence type="ECO:0000312" key="13">
    <source>
        <dbReference type="EMBL" id="CAB40349.1"/>
    </source>
</evidence>
<evidence type="ECO:0007829" key="14">
    <source>
        <dbReference type="PDB" id="5NFG"/>
    </source>
</evidence>
<feature type="signal peptide" evidence="3">
    <location>
        <begin position="1"/>
        <end position="24"/>
    </location>
</feature>
<feature type="chain" id="PRO_5000065111" description="Procardosin-B" evidence="3">
    <location>
        <begin position="25"/>
        <end position="506"/>
    </location>
</feature>
<feature type="propeptide" id="PRO_0000394448" evidence="10">
    <location>
        <begin position="25"/>
        <end position="70"/>
    </location>
</feature>
<feature type="chain" id="PRO_5000065112" description="Cardosin-B heavy chain" evidence="10">
    <location>
        <begin position="71"/>
        <end status="unknown"/>
    </location>
</feature>
<feature type="chain" id="PRO_5000065113" description="Cardosin-B light chain" evidence="10">
    <location>
        <begin position="418"/>
        <end position="506"/>
    </location>
</feature>
<feature type="domain" description="Peptidase A1" evidence="5">
    <location>
        <begin position="85"/>
        <end position="503"/>
    </location>
</feature>
<feature type="domain" description="Saposin B-type" evidence="1 4">
    <location>
        <begin position="315"/>
        <end position="417"/>
    </location>
</feature>
<feature type="active site" evidence="1 6">
    <location>
        <position position="103"/>
    </location>
</feature>
<feature type="active site" evidence="1 6">
    <location>
        <position position="290"/>
    </location>
</feature>
<feature type="glycosylation site" description="N-linked (GlcNAc...) asparagine" evidence="4">
    <location>
        <position position="139"/>
    </location>
</feature>
<feature type="glycosylation site" description="N-linked (GlcNAc...) asparagine" evidence="4">
    <location>
        <position position="252"/>
    </location>
</feature>
<feature type="glycosylation site" description="N-linked (GlcNAc...) asparagine" evidence="4">
    <location>
        <position position="397"/>
    </location>
</feature>
<feature type="disulfide bond" evidence="1 4">
    <location>
        <begin position="116"/>
        <end position="122"/>
    </location>
</feature>
<feature type="disulfide bond" evidence="1 4">
    <location>
        <begin position="281"/>
        <end position="285"/>
    </location>
</feature>
<feature type="disulfide bond" evidence="4">
    <location>
        <begin position="320"/>
        <end position="411"/>
    </location>
</feature>
<feature type="disulfide bond" evidence="4">
    <location>
        <begin position="345"/>
        <end position="383"/>
    </location>
</feature>
<feature type="disulfide bond" evidence="4">
    <location>
        <begin position="351"/>
        <end position="380"/>
    </location>
</feature>
<feature type="disulfide bond" evidence="1 4">
    <location>
        <begin position="425"/>
        <end position="462"/>
    </location>
</feature>
<feature type="sequence conflict" description="In Ref. 2; AA sequence." evidence="12" ref="2">
    <original>AYY</original>
    <variation>DYF</variation>
    <location>
        <begin position="84"/>
        <end position="86"/>
    </location>
</feature>
<feature type="sequence conflict" description="In Ref. 2; AA sequence." evidence="12" ref="2">
    <original>GIG</original>
    <variation>PTQ</variation>
    <location>
        <begin position="90"/>
        <end position="92"/>
    </location>
</feature>
<feature type="sequence conflict" description="In Ref. 2; AA sequence." evidence="12" ref="2">
    <original>NHT</original>
    <variation>GHY</variation>
    <location>
        <begin position="252"/>
        <end position="254"/>
    </location>
</feature>
<feature type="sequence conflict" description="In Ref. 2; AA sequence." evidence="12" ref="2">
    <original>I</original>
    <variation>T</variation>
    <location>
        <position position="434"/>
    </location>
</feature>
<feature type="sequence conflict" description="In Ref. 2; AA sequence." evidence="12" ref="2">
    <original>SKL</original>
    <variation>GKK</variation>
    <location>
        <begin position="440"/>
        <end position="442"/>
    </location>
</feature>
<feature type="sequence conflict" description="In Ref. 2; AA sequence." evidence="12" ref="2">
    <original>V</original>
    <variation>L</variation>
    <location>
        <position position="445"/>
    </location>
</feature>
<feature type="sequence conflict" description="In Ref. 2; AA sequence." evidence="12" ref="2">
    <original>G</original>
    <variation>S</variation>
    <location>
        <position position="487"/>
    </location>
</feature>
<feature type="strand" evidence="14">
    <location>
        <begin position="74"/>
        <end position="80"/>
    </location>
</feature>
<feature type="turn" evidence="14">
    <location>
        <begin position="81"/>
        <end position="83"/>
    </location>
</feature>
<feature type="strand" evidence="14">
    <location>
        <begin position="84"/>
        <end position="91"/>
    </location>
</feature>
<feature type="turn" evidence="14">
    <location>
        <begin position="92"/>
        <end position="95"/>
    </location>
</feature>
<feature type="strand" evidence="14">
    <location>
        <begin position="96"/>
        <end position="103"/>
    </location>
</feature>
<feature type="strand" evidence="14">
    <location>
        <begin position="109"/>
        <end position="113"/>
    </location>
</feature>
<feature type="helix" evidence="14">
    <location>
        <begin position="120"/>
        <end position="124"/>
    </location>
</feature>
<feature type="helix" evidence="14">
    <location>
        <begin position="130"/>
        <end position="132"/>
    </location>
</feature>
<feature type="strand" evidence="14">
    <location>
        <begin position="137"/>
        <end position="147"/>
    </location>
</feature>
<feature type="strand" evidence="14">
    <location>
        <begin position="150"/>
        <end position="163"/>
    </location>
</feature>
<feature type="strand" evidence="14">
    <location>
        <begin position="166"/>
        <end position="179"/>
    </location>
</feature>
<feature type="helix" evidence="14">
    <location>
        <begin position="181"/>
        <end position="184"/>
    </location>
</feature>
<feature type="strand" evidence="14">
    <location>
        <begin position="191"/>
        <end position="194"/>
    </location>
</feature>
<feature type="helix" evidence="14">
    <location>
        <begin position="198"/>
        <end position="200"/>
    </location>
</feature>
<feature type="helix" evidence="14">
    <location>
        <begin position="208"/>
        <end position="215"/>
    </location>
</feature>
<feature type="strand" evidence="14">
    <location>
        <begin position="219"/>
        <end position="227"/>
    </location>
</feature>
<feature type="strand" evidence="14">
    <location>
        <begin position="237"/>
        <end position="243"/>
    </location>
</feature>
<feature type="helix" evidence="14">
    <location>
        <begin position="246"/>
        <end position="248"/>
    </location>
</feature>
<feature type="strand" evidence="14">
    <location>
        <begin position="249"/>
        <end position="257"/>
    </location>
</feature>
<feature type="turn" evidence="14">
    <location>
        <begin position="261"/>
        <end position="264"/>
    </location>
</feature>
<feature type="strand" evidence="14">
    <location>
        <begin position="265"/>
        <end position="268"/>
    </location>
</feature>
<feature type="turn" evidence="14">
    <location>
        <begin position="280"/>
        <end position="284"/>
    </location>
</feature>
<feature type="strand" evidence="14">
    <location>
        <begin position="285"/>
        <end position="289"/>
    </location>
</feature>
<feature type="strand" evidence="14">
    <location>
        <begin position="295"/>
        <end position="298"/>
    </location>
</feature>
<feature type="helix" evidence="14">
    <location>
        <begin position="300"/>
        <end position="310"/>
    </location>
</feature>
<feature type="helix" evidence="14">
    <location>
        <begin position="428"/>
        <end position="430"/>
    </location>
</feature>
<feature type="strand" evidence="14">
    <location>
        <begin position="434"/>
        <end position="437"/>
    </location>
</feature>
<feature type="strand" evidence="14">
    <location>
        <begin position="439"/>
        <end position="445"/>
    </location>
</feature>
<feature type="helix" evidence="14">
    <location>
        <begin position="447"/>
        <end position="450"/>
    </location>
</feature>
<feature type="strand" evidence="14">
    <location>
        <begin position="451"/>
        <end position="453"/>
    </location>
</feature>
<feature type="strand" evidence="14">
    <location>
        <begin position="455"/>
        <end position="459"/>
    </location>
</feature>
<feature type="strand" evidence="14">
    <location>
        <begin position="462"/>
        <end position="468"/>
    </location>
</feature>
<feature type="strand" evidence="14">
    <location>
        <begin position="476"/>
        <end position="481"/>
    </location>
</feature>
<feature type="helix" evidence="14">
    <location>
        <begin position="483"/>
        <end position="486"/>
    </location>
</feature>
<feature type="strand" evidence="14">
    <location>
        <begin position="489"/>
        <end position="494"/>
    </location>
</feature>
<feature type="turn" evidence="14">
    <location>
        <begin position="495"/>
        <end position="498"/>
    </location>
</feature>
<feature type="strand" evidence="14">
    <location>
        <begin position="499"/>
        <end position="505"/>
    </location>
</feature>
<comment type="function">
    <text evidence="8 10">Aspartic protease. Cleaves alpha-lactalbumin but not beta-lactoglobulin.</text>
</comment>
<comment type="activity regulation">
    <text evidence="10">Inhibited by the specific aspartic proteinase inhibitors diazoacetyl-noleucine methyl ester and pepstatin.</text>
</comment>
<comment type="biophysicochemical properties">
    <kinetics>
        <KM evidence="10">0.081 mM for Leu-Ser-Phe(NO2)-Ahx-Ala-Leu</KM>
        <KM evidence="10">0.11 mM for Lys-Pro-Ala-Glu-Phe-Phe(NO2)-Ala-Leu</KM>
    </kinetics>
    <phDependence>
        <text evidence="10">Optimum pH is 5.0. Active from pH 2.0-7.0.</text>
    </phDependence>
    <temperatureDependence>
        <text evidence="10">Stable at temperatures of up to 60 degrees Celsius.</text>
    </temperatureDependence>
</comment>
<comment type="subunit">
    <text evidence="2 10">Heterodimer of a light chain and a heavy chain. An intermediate form is produced first, and undergoes proteolytic processing to remove the internal plant-specific insert (PSI) and the propeptide.</text>
</comment>
<comment type="subcellular location">
    <subcellularLocation>
        <location evidence="2">Microsome membrane</location>
    </subcellularLocation>
    <subcellularLocation>
        <location evidence="2">Protein storage vacuole</location>
    </subcellularLocation>
    <subcellularLocation>
        <location evidence="7">Secreted</location>
        <location evidence="7">Cell wall</location>
    </subcellularLocation>
    <subcellularLocation>
        <location evidence="7">Secreted</location>
        <location evidence="7">Extracellular space</location>
        <location evidence="7">Extracellular matrix</location>
    </subcellularLocation>
    <text evidence="2 7">Procardosin-B is associated with the microsomal membranes, the mature form is secreted.</text>
</comment>
<comment type="tissue specificity">
    <text evidence="7 9">Detected in pistils, but not in seeds, bracts, midribs, roots, leaves or stamen extracts (PubMed:11414612). Detected in seeds (PubMed:18767217). In stigmas and styles, detected in the transmitting tissue and in contiguous subepidermal layers at the longitudenal grooves of the stigma (at protein level).</text>
</comment>
<comment type="developmental stage">
    <text evidence="7 9">In flowers, highest levels of mRNA are found in closed capitula and amount decreases during floral development, detected at protein level in both closed and open flowers. At the mRNA level, virtually undetectable in seeds at all stages. At protein level, detected in the embryo during the first stages after seed hydration, levels gradually decrease and it becomes almost undetectable after 72-84 hours.</text>
</comment>
<comment type="similarity">
    <text evidence="3">Belongs to the peptidase A1 family.</text>
</comment>
<name>CARDB_CYNCA</name>
<protein>
    <recommendedName>
        <fullName evidence="11">Procardosin-B</fullName>
        <ecNumber>3.4.23.-</ecNumber>
    </recommendedName>
    <component>
        <recommendedName>
            <fullName evidence="11">Cardosin-B heavy chain</fullName>
        </recommendedName>
        <alternativeName>
            <fullName evidence="11">Cardosin-B 34 kDa subunit</fullName>
        </alternativeName>
    </component>
    <component>
        <recommendedName>
            <fullName evidence="11">Cardosin-B light chain</fullName>
        </recommendedName>
        <alternativeName>
            <fullName evidence="11">Cardosin-B 14 kDa subunit</fullName>
        </alternativeName>
    </component>
</protein>
<proteinExistence type="evidence at protein level"/>
<reference evidence="12 13" key="1">
    <citation type="journal article" date="2001" name="Plant Mol. Biol.">
        <title>Molecular cloning and characterization of cDNA encoding cardosin B, an aspartic proteinase accumulating extracellularly in the transmitting tissue of Cynara cardunculus L.</title>
        <authorList>
            <person name="Vieira M."/>
            <person name="Pissarr J."/>
            <person name="Verissimo P."/>
            <person name="Castanheira P."/>
            <person name="Costa Y."/>
            <person name="Pires E."/>
            <person name="Faro C."/>
        </authorList>
    </citation>
    <scope>NUCLEOTIDE SEQUENCE [MRNA]</scope>
    <scope>SUBCELLULAR LOCATION</scope>
    <scope>TISSUE SPECIFICITY</scope>
    <scope>DEVELOPMENTAL STAGE</scope>
    <source>
        <tissue evidence="7">Flower bud</tissue>
    </source>
</reference>
<reference evidence="12" key="2">
    <citation type="journal article" date="1996" name="Eur. J. Biochem.">
        <title>Purification, characterization and partial amino acid sequencing of two new aspartic proteinases from fresh flowers of Cynara cardunculus L.</title>
        <authorList>
            <person name="Verissimo P."/>
            <person name="Faro C."/>
            <person name="Moir A.J."/>
            <person name="Lin Y."/>
            <person name="Tang J."/>
            <person name="Pires E."/>
        </authorList>
    </citation>
    <scope>PROTEIN SEQUENCE OF 71-113; 199-229; 239-260; 268-276; 418-442; 445-448 AND 486-502</scope>
    <scope>FUNCTION</scope>
    <scope>ACTIVITY REGULATION</scope>
    <scope>BIOPHYSICOCHEMICAL PROPERTIES</scope>
    <scope>SUBUNIT</scope>
    <source>
        <tissue evidence="10">Stigma</tissue>
    </source>
</reference>
<reference evidence="12" key="3">
    <citation type="journal article" date="2006" name="J. Dairy Sci.">
        <title>Molecular characterization of peptides released from beta-lactoglobulin and alpha-lactalbumin via cardosins A and B.</title>
        <authorList>
            <person name="Barros R.M."/>
            <person name="Malcata F.X."/>
        </authorList>
    </citation>
    <scope>FUNCTION</scope>
</reference>
<reference evidence="12" key="4">
    <citation type="journal article" date="2008" name="Protoplasma">
        <title>Cardosins in postembryonic development of cardoon: towards an elucidation of the biological function of plant aspartic proteinases.</title>
        <authorList>
            <person name="Pereira C.S."/>
            <person name="da Costa D.S."/>
            <person name="Pereira S."/>
            <person name="Nogueira Fde M."/>
            <person name="Albuquerque P.M."/>
            <person name="Teixeira J."/>
            <person name="Faro C."/>
            <person name="Pissarra J."/>
        </authorList>
    </citation>
    <scope>DEVELOPMENTAL STAGE</scope>
</reference>
<accession>Q9XFX4</accession>
<dbReference type="EC" id="3.4.23.-"/>
<dbReference type="EMBL" id="AJ237674">
    <property type="protein sequence ID" value="CAB40349.1"/>
    <property type="molecule type" value="mRNA"/>
</dbReference>
<dbReference type="PDB" id="5NFG">
    <property type="method" value="X-ray"/>
    <property type="resolution" value="2.38 A"/>
    <property type="chains" value="A/B=25-314, A/B=418-506"/>
</dbReference>
<dbReference type="PDBsum" id="5NFG"/>
<dbReference type="SMR" id="Q9XFX4"/>
<dbReference type="MEROPS" id="A01.020"/>
<dbReference type="GlyCosmos" id="Q9XFX4">
    <property type="glycosylation" value="3 sites, No reported glycans"/>
</dbReference>
<dbReference type="BRENDA" id="3.4.23.40">
    <property type="organism ID" value="1789"/>
</dbReference>
<dbReference type="SABIO-RK" id="Q9XFX4"/>
<dbReference type="GO" id="GO:0005783">
    <property type="term" value="C:endoplasmic reticulum"/>
    <property type="evidence" value="ECO:0007669"/>
    <property type="project" value="UniProtKB-KW"/>
</dbReference>
<dbReference type="GO" id="GO:0005576">
    <property type="term" value="C:extracellular region"/>
    <property type="evidence" value="ECO:0007669"/>
    <property type="project" value="UniProtKB-KW"/>
</dbReference>
<dbReference type="GO" id="GO:0016020">
    <property type="term" value="C:membrane"/>
    <property type="evidence" value="ECO:0007669"/>
    <property type="project" value="UniProtKB-KW"/>
</dbReference>
<dbReference type="GO" id="GO:0000326">
    <property type="term" value="C:protein storage vacuole"/>
    <property type="evidence" value="ECO:0007669"/>
    <property type="project" value="UniProtKB-SubCell"/>
</dbReference>
<dbReference type="GO" id="GO:0004190">
    <property type="term" value="F:aspartic-type endopeptidase activity"/>
    <property type="evidence" value="ECO:0007669"/>
    <property type="project" value="UniProtKB-KW"/>
</dbReference>
<dbReference type="GO" id="GO:0006629">
    <property type="term" value="P:lipid metabolic process"/>
    <property type="evidence" value="ECO:0007669"/>
    <property type="project" value="InterPro"/>
</dbReference>
<dbReference type="GO" id="GO:0006508">
    <property type="term" value="P:proteolysis"/>
    <property type="evidence" value="ECO:0007669"/>
    <property type="project" value="UniProtKB-KW"/>
</dbReference>
<dbReference type="CDD" id="cd06098">
    <property type="entry name" value="phytepsin"/>
    <property type="match status" value="1"/>
</dbReference>
<dbReference type="FunFam" id="2.40.70.10:FF:000115">
    <property type="entry name" value="Lysosomal aspartic protease"/>
    <property type="match status" value="1"/>
</dbReference>
<dbReference type="Gene3D" id="2.40.70.10">
    <property type="entry name" value="Acid Proteases"/>
    <property type="match status" value="2"/>
</dbReference>
<dbReference type="Gene3D" id="1.10.225.10">
    <property type="entry name" value="Saposin-like"/>
    <property type="match status" value="1"/>
</dbReference>
<dbReference type="InterPro" id="IPR001461">
    <property type="entry name" value="Aspartic_peptidase_A1"/>
</dbReference>
<dbReference type="InterPro" id="IPR001969">
    <property type="entry name" value="Aspartic_peptidase_AS"/>
</dbReference>
<dbReference type="InterPro" id="IPR033121">
    <property type="entry name" value="PEPTIDASE_A1"/>
</dbReference>
<dbReference type="InterPro" id="IPR021109">
    <property type="entry name" value="Peptidase_aspartic_dom_sf"/>
</dbReference>
<dbReference type="InterPro" id="IPR033869">
    <property type="entry name" value="Phytepsin"/>
</dbReference>
<dbReference type="InterPro" id="IPR007856">
    <property type="entry name" value="SapB_1"/>
</dbReference>
<dbReference type="InterPro" id="IPR008138">
    <property type="entry name" value="SapB_2"/>
</dbReference>
<dbReference type="InterPro" id="IPR011001">
    <property type="entry name" value="Saposin-like"/>
</dbReference>
<dbReference type="InterPro" id="IPR008139">
    <property type="entry name" value="SaposinB_dom"/>
</dbReference>
<dbReference type="PANTHER" id="PTHR47966:SF76">
    <property type="entry name" value="ASPARTIC PROTEINASE A1"/>
    <property type="match status" value="1"/>
</dbReference>
<dbReference type="PANTHER" id="PTHR47966">
    <property type="entry name" value="BETA-SITE APP-CLEAVING ENZYME, ISOFORM A-RELATED"/>
    <property type="match status" value="1"/>
</dbReference>
<dbReference type="Pfam" id="PF00026">
    <property type="entry name" value="Asp"/>
    <property type="match status" value="1"/>
</dbReference>
<dbReference type="Pfam" id="PF05184">
    <property type="entry name" value="SapB_1"/>
    <property type="match status" value="1"/>
</dbReference>
<dbReference type="Pfam" id="PF03489">
    <property type="entry name" value="SapB_2"/>
    <property type="match status" value="1"/>
</dbReference>
<dbReference type="PRINTS" id="PR00792">
    <property type="entry name" value="PEPSIN"/>
</dbReference>
<dbReference type="SUPFAM" id="SSF50630">
    <property type="entry name" value="Acid proteases"/>
    <property type="match status" value="1"/>
</dbReference>
<dbReference type="SUPFAM" id="SSF47862">
    <property type="entry name" value="Saposin"/>
    <property type="match status" value="1"/>
</dbReference>
<dbReference type="PROSITE" id="PS00141">
    <property type="entry name" value="ASP_PROTEASE"/>
    <property type="match status" value="2"/>
</dbReference>
<dbReference type="PROSITE" id="PS51767">
    <property type="entry name" value="PEPTIDASE_A1"/>
    <property type="match status" value="1"/>
</dbReference>
<dbReference type="PROSITE" id="PS50015">
    <property type="entry name" value="SAP_B"/>
    <property type="match status" value="2"/>
</dbReference>
<gene>
    <name evidence="13" type="primary">cardB</name>
</gene>
<organism>
    <name type="scientific">Cynara cardunculus</name>
    <name type="common">Cardoon</name>
    <dbReference type="NCBI Taxonomy" id="4265"/>
    <lineage>
        <taxon>Eukaryota</taxon>
        <taxon>Viridiplantae</taxon>
        <taxon>Streptophyta</taxon>
        <taxon>Embryophyta</taxon>
        <taxon>Tracheophyta</taxon>
        <taxon>Spermatophyta</taxon>
        <taxon>Magnoliopsida</taxon>
        <taxon>eudicotyledons</taxon>
        <taxon>Gunneridae</taxon>
        <taxon>Pentapetalae</taxon>
        <taxon>asterids</taxon>
        <taxon>campanulids</taxon>
        <taxon>Asterales</taxon>
        <taxon>Asteraceae</taxon>
        <taxon>Carduoideae</taxon>
        <taxon>Cardueae</taxon>
        <taxon>Carduinae</taxon>
        <taxon>Cynara</taxon>
    </lineage>
</organism>